<organism>
    <name type="scientific">Mus musculus</name>
    <name type="common">Mouse</name>
    <dbReference type="NCBI Taxonomy" id="10090"/>
    <lineage>
        <taxon>Eukaryota</taxon>
        <taxon>Metazoa</taxon>
        <taxon>Chordata</taxon>
        <taxon>Craniata</taxon>
        <taxon>Vertebrata</taxon>
        <taxon>Euteleostomi</taxon>
        <taxon>Mammalia</taxon>
        <taxon>Eutheria</taxon>
        <taxon>Euarchontoglires</taxon>
        <taxon>Glires</taxon>
        <taxon>Rodentia</taxon>
        <taxon>Myomorpha</taxon>
        <taxon>Muroidea</taxon>
        <taxon>Muridae</taxon>
        <taxon>Murinae</taxon>
        <taxon>Mus</taxon>
        <taxon>Mus</taxon>
    </lineage>
</organism>
<name>HCDH_MOUSE</name>
<protein>
    <recommendedName>
        <fullName>Hydroxyacyl-coenzyme A dehydrogenase, mitochondrial</fullName>
        <shortName>HCDH</shortName>
        <ecNumber evidence="1">1.1.1.35</ecNumber>
    </recommendedName>
    <alternativeName>
        <fullName evidence="8">Medium and short-chain L-3-hydroxyacyl-coenzyme A dehydrogenase</fullName>
    </alternativeName>
    <alternativeName>
        <fullName>Short-chain 3-hydroxyacyl-CoA dehydrogenase</fullName>
    </alternativeName>
</protein>
<accession>Q61425</accession>
<accession>Q3TF75</accession>
<accession>Q3THK8</accession>
<accession>Q3UFI0</accession>
<accession>Q8K149</accession>
<accession>Q925U9</accession>
<reference key="1">
    <citation type="journal article" date="1995" name="Gene">
        <title>Isolation of a cDNA clone encoding mouse 3-hydroxyacyl CoA dehydrogenase.</title>
        <authorList>
            <person name="Nomura M."/>
            <person name="Takihara Y."/>
            <person name="Shimada K."/>
        </authorList>
    </citation>
    <scope>NUCLEOTIDE SEQUENCE [MRNA]</scope>
</reference>
<reference key="2">
    <citation type="submission" date="2001-05" db="EMBL/GenBank/DDBJ databases">
        <title>Mouse medium and short chain L-3-hydroxyacyl-coenzyme A dehydrogenase gene.</title>
        <authorList>
            <person name="O'Brien L.K."/>
            <person name="Sims H.F."/>
            <person name="Strauss A.W."/>
        </authorList>
    </citation>
    <scope>NUCLEOTIDE SEQUENCE [GENOMIC DNA]</scope>
</reference>
<reference key="3">
    <citation type="journal article" date="2005" name="Science">
        <title>The transcriptional landscape of the mammalian genome.</title>
        <authorList>
            <person name="Carninci P."/>
            <person name="Kasukawa T."/>
            <person name="Katayama S."/>
            <person name="Gough J."/>
            <person name="Frith M.C."/>
            <person name="Maeda N."/>
            <person name="Oyama R."/>
            <person name="Ravasi T."/>
            <person name="Lenhard B."/>
            <person name="Wells C."/>
            <person name="Kodzius R."/>
            <person name="Shimokawa K."/>
            <person name="Bajic V.B."/>
            <person name="Brenner S.E."/>
            <person name="Batalov S."/>
            <person name="Forrest A.R."/>
            <person name="Zavolan M."/>
            <person name="Davis M.J."/>
            <person name="Wilming L.G."/>
            <person name="Aidinis V."/>
            <person name="Allen J.E."/>
            <person name="Ambesi-Impiombato A."/>
            <person name="Apweiler R."/>
            <person name="Aturaliya R.N."/>
            <person name="Bailey T.L."/>
            <person name="Bansal M."/>
            <person name="Baxter L."/>
            <person name="Beisel K.W."/>
            <person name="Bersano T."/>
            <person name="Bono H."/>
            <person name="Chalk A.M."/>
            <person name="Chiu K.P."/>
            <person name="Choudhary V."/>
            <person name="Christoffels A."/>
            <person name="Clutterbuck D.R."/>
            <person name="Crowe M.L."/>
            <person name="Dalla E."/>
            <person name="Dalrymple B.P."/>
            <person name="de Bono B."/>
            <person name="Della Gatta G."/>
            <person name="di Bernardo D."/>
            <person name="Down T."/>
            <person name="Engstrom P."/>
            <person name="Fagiolini M."/>
            <person name="Faulkner G."/>
            <person name="Fletcher C.F."/>
            <person name="Fukushima T."/>
            <person name="Furuno M."/>
            <person name="Futaki S."/>
            <person name="Gariboldi M."/>
            <person name="Georgii-Hemming P."/>
            <person name="Gingeras T.R."/>
            <person name="Gojobori T."/>
            <person name="Green R.E."/>
            <person name="Gustincich S."/>
            <person name="Harbers M."/>
            <person name="Hayashi Y."/>
            <person name="Hensch T.K."/>
            <person name="Hirokawa N."/>
            <person name="Hill D."/>
            <person name="Huminiecki L."/>
            <person name="Iacono M."/>
            <person name="Ikeo K."/>
            <person name="Iwama A."/>
            <person name="Ishikawa T."/>
            <person name="Jakt M."/>
            <person name="Kanapin A."/>
            <person name="Katoh M."/>
            <person name="Kawasawa Y."/>
            <person name="Kelso J."/>
            <person name="Kitamura H."/>
            <person name="Kitano H."/>
            <person name="Kollias G."/>
            <person name="Krishnan S.P."/>
            <person name="Kruger A."/>
            <person name="Kummerfeld S.K."/>
            <person name="Kurochkin I.V."/>
            <person name="Lareau L.F."/>
            <person name="Lazarevic D."/>
            <person name="Lipovich L."/>
            <person name="Liu J."/>
            <person name="Liuni S."/>
            <person name="McWilliam S."/>
            <person name="Madan Babu M."/>
            <person name="Madera M."/>
            <person name="Marchionni L."/>
            <person name="Matsuda H."/>
            <person name="Matsuzawa S."/>
            <person name="Miki H."/>
            <person name="Mignone F."/>
            <person name="Miyake S."/>
            <person name="Morris K."/>
            <person name="Mottagui-Tabar S."/>
            <person name="Mulder N."/>
            <person name="Nakano N."/>
            <person name="Nakauchi H."/>
            <person name="Ng P."/>
            <person name="Nilsson R."/>
            <person name="Nishiguchi S."/>
            <person name="Nishikawa S."/>
            <person name="Nori F."/>
            <person name="Ohara O."/>
            <person name="Okazaki Y."/>
            <person name="Orlando V."/>
            <person name="Pang K.C."/>
            <person name="Pavan W.J."/>
            <person name="Pavesi G."/>
            <person name="Pesole G."/>
            <person name="Petrovsky N."/>
            <person name="Piazza S."/>
            <person name="Reed J."/>
            <person name="Reid J.F."/>
            <person name="Ring B.Z."/>
            <person name="Ringwald M."/>
            <person name="Rost B."/>
            <person name="Ruan Y."/>
            <person name="Salzberg S.L."/>
            <person name="Sandelin A."/>
            <person name="Schneider C."/>
            <person name="Schoenbach C."/>
            <person name="Sekiguchi K."/>
            <person name="Semple C.A."/>
            <person name="Seno S."/>
            <person name="Sessa L."/>
            <person name="Sheng Y."/>
            <person name="Shibata Y."/>
            <person name="Shimada H."/>
            <person name="Shimada K."/>
            <person name="Silva D."/>
            <person name="Sinclair B."/>
            <person name="Sperling S."/>
            <person name="Stupka E."/>
            <person name="Sugiura K."/>
            <person name="Sultana R."/>
            <person name="Takenaka Y."/>
            <person name="Taki K."/>
            <person name="Tammoja K."/>
            <person name="Tan S.L."/>
            <person name="Tang S."/>
            <person name="Taylor M.S."/>
            <person name="Tegner J."/>
            <person name="Teichmann S.A."/>
            <person name="Ueda H.R."/>
            <person name="van Nimwegen E."/>
            <person name="Verardo R."/>
            <person name="Wei C.L."/>
            <person name="Yagi K."/>
            <person name="Yamanishi H."/>
            <person name="Zabarovsky E."/>
            <person name="Zhu S."/>
            <person name="Zimmer A."/>
            <person name="Hide W."/>
            <person name="Bult C."/>
            <person name="Grimmond S.M."/>
            <person name="Teasdale R.D."/>
            <person name="Liu E.T."/>
            <person name="Brusic V."/>
            <person name="Quackenbush J."/>
            <person name="Wahlestedt C."/>
            <person name="Mattick J.S."/>
            <person name="Hume D.A."/>
            <person name="Kai C."/>
            <person name="Sasaki D."/>
            <person name="Tomaru Y."/>
            <person name="Fukuda S."/>
            <person name="Kanamori-Katayama M."/>
            <person name="Suzuki M."/>
            <person name="Aoki J."/>
            <person name="Arakawa T."/>
            <person name="Iida J."/>
            <person name="Imamura K."/>
            <person name="Itoh M."/>
            <person name="Kato T."/>
            <person name="Kawaji H."/>
            <person name="Kawagashira N."/>
            <person name="Kawashima T."/>
            <person name="Kojima M."/>
            <person name="Kondo S."/>
            <person name="Konno H."/>
            <person name="Nakano K."/>
            <person name="Ninomiya N."/>
            <person name="Nishio T."/>
            <person name="Okada M."/>
            <person name="Plessy C."/>
            <person name="Shibata K."/>
            <person name="Shiraki T."/>
            <person name="Suzuki S."/>
            <person name="Tagami M."/>
            <person name="Waki K."/>
            <person name="Watahiki A."/>
            <person name="Okamura-Oho Y."/>
            <person name="Suzuki H."/>
            <person name="Kawai J."/>
            <person name="Hayashizaki Y."/>
        </authorList>
    </citation>
    <scope>NUCLEOTIDE SEQUENCE [LARGE SCALE MRNA]</scope>
    <source>
        <strain>C57BL/6J</strain>
        <tissue>Amnion</tissue>
        <tissue>Extraembryonic tissue</tissue>
        <tissue>Pancreas</tissue>
        <tissue>Placenta</tissue>
    </source>
</reference>
<reference key="4">
    <citation type="journal article" date="2004" name="Genome Res.">
        <title>The status, quality, and expansion of the NIH full-length cDNA project: the Mammalian Gene Collection (MGC).</title>
        <authorList>
            <consortium name="The MGC Project Team"/>
        </authorList>
    </citation>
    <scope>NUCLEOTIDE SEQUENCE [LARGE SCALE MRNA]</scope>
    <source>
        <tissue>Kidney</tissue>
        <tissue>Liver</tissue>
    </source>
</reference>
<reference key="5">
    <citation type="journal article" date="2010" name="J. Biol. Chem.">
        <title>Mechanism of hyperinsulinism in short-chain 3-hydroxyacyl-CoA dehydrogenase deficiency involves activation of glutamate dehydrogenase.</title>
        <authorList>
            <person name="Li C."/>
            <person name="Chen P."/>
            <person name="Palladino A."/>
            <person name="Narayan S."/>
            <person name="Russell L.K."/>
            <person name="Sayed S."/>
            <person name="Xiong G."/>
            <person name="Chen J."/>
            <person name="Stokes D."/>
            <person name="Butt Y.M."/>
            <person name="Jones P.M."/>
            <person name="Collins H.W."/>
            <person name="Cohen N.A."/>
            <person name="Cohen A.S."/>
            <person name="Nissim I."/>
            <person name="Smith T.J."/>
            <person name="Strauss A.W."/>
            <person name="Matschinsky F.M."/>
            <person name="Bennett M.J."/>
            <person name="Stanley C.A."/>
        </authorList>
    </citation>
    <scope>DISRUPTION PHENOTYPE</scope>
    <scope>FUNCTION</scope>
    <scope>TISSUE SPECIFICITY</scope>
    <scope>INTERACTION WITH GLUD1</scope>
</reference>
<reference key="6">
    <citation type="journal article" date="2010" name="Cell">
        <title>A tissue-specific atlas of mouse protein phosphorylation and expression.</title>
        <authorList>
            <person name="Huttlin E.L."/>
            <person name="Jedrychowski M.P."/>
            <person name="Elias J.E."/>
            <person name="Goswami T."/>
            <person name="Rad R."/>
            <person name="Beausoleil S.A."/>
            <person name="Villen J."/>
            <person name="Haas W."/>
            <person name="Sowa M.E."/>
            <person name="Gygi S.P."/>
        </authorList>
    </citation>
    <scope>IDENTIFICATION BY MASS SPECTROMETRY [LARGE SCALE ANALYSIS]</scope>
    <source>
        <tissue>Brain</tissue>
        <tissue>Brown adipose tissue</tissue>
        <tissue>Heart</tissue>
        <tissue>Kidney</tissue>
        <tissue>Liver</tissue>
        <tissue>Lung</tissue>
        <tissue>Pancreas</tissue>
        <tissue>Spleen</tissue>
        <tissue>Testis</tissue>
    </source>
</reference>
<reference key="7">
    <citation type="journal article" date="2013" name="Mol. Cell">
        <title>SIRT5-mediated lysine desuccinylation impacts diverse metabolic pathways.</title>
        <authorList>
            <person name="Park J."/>
            <person name="Chen Y."/>
            <person name="Tishkoff D.X."/>
            <person name="Peng C."/>
            <person name="Tan M."/>
            <person name="Dai L."/>
            <person name="Xie Z."/>
            <person name="Zhang Y."/>
            <person name="Zwaans B.M."/>
            <person name="Skinner M.E."/>
            <person name="Lombard D.B."/>
            <person name="Zhao Y."/>
        </authorList>
    </citation>
    <scope>SUCCINYLATION AT LYS-81</scope>
    <scope>DESUCCINYLATION BY SIRT5</scope>
    <scope>ACETYLATION [LARGE SCALE ANALYSIS] AT LYS-241</scope>
    <scope>SUCCINYLATION [LARGE SCALE ANALYSIS] AT LYS-80; LYS-81; LYS-87; LYS-136; LYS-185; LYS-192; LYS-202; LYS-206; LYS-212; LYS-241 AND LYS-312</scope>
    <scope>IDENTIFICATION BY MASS SPECTROMETRY [LARGE SCALE ANALYSIS]</scope>
    <source>
        <tissue>Embryonic fibroblast</tissue>
        <tissue>Liver</tissue>
    </source>
</reference>
<reference key="8">
    <citation type="journal article" date="2013" name="Proc. Natl. Acad. Sci. U.S.A.">
        <title>Label-free quantitative proteomics of the lysine acetylome in mitochondria identifies substrates of SIRT3 in metabolic pathways.</title>
        <authorList>
            <person name="Rardin M.J."/>
            <person name="Newman J.C."/>
            <person name="Held J.M."/>
            <person name="Cusack M.P."/>
            <person name="Sorensen D.J."/>
            <person name="Li B."/>
            <person name="Schilling B."/>
            <person name="Mooney S.D."/>
            <person name="Kahn C.R."/>
            <person name="Verdin E."/>
            <person name="Gibson B.W."/>
        </authorList>
    </citation>
    <scope>ACETYLATION [LARGE SCALE ANALYSIS] AT LYS-75; LYS-81; LYS-87; LYS-125; LYS-136; LYS-179; LYS-185; LYS-192; LYS-202; LYS-212 AND LYS-241</scope>
    <scope>IDENTIFICATION BY MASS SPECTROMETRY [LARGE SCALE ANALYSIS]</scope>
    <source>
        <tissue>Liver</tissue>
    </source>
</reference>
<reference evidence="9" key="9">
    <citation type="journal article" date="2022" name="Biochem. Biophys. Res. Commun.">
        <title>A novel isoform of hydroxyacyl-CoA dehydrogenase inhibits cell proliferation.</title>
        <authorList>
            <person name="Xia G."/>
            <person name="Gao Y."/>
            <person name="Wu C."/>
            <person name="Pan H."/>
            <person name="Hou J."/>
            <person name="Su J."/>
            <person name="Wei S."/>
            <person name="Gao X."/>
        </authorList>
    </citation>
    <scope>FUNCTION (ISOFORM 2)</scope>
    <scope>SUBCELLULAR LOCATION (ISOFORMS 1 AND 2)</scope>
    <scope>ALTERNATIVE INITIATION</scope>
</reference>
<reference evidence="9" key="10">
    <citation type="journal article" date="2022" name="FASEB J.">
        <title>Hadh deficiency induced oligoasthenoteratozoospermia through the TNF-alpha/Bcl-2 pathway in male mice.</title>
        <authorList>
            <person name="Zhu H."/>
            <person name="Wang H."/>
            <person name="Cheng Y."/>
            <person name="Liu D."/>
            <person name="Zhang A."/>
            <person name="Wen Z."/>
            <person name="Gao J."/>
        </authorList>
    </citation>
    <scope>FUNCTION</scope>
    <scope>DISRUPTION PHENOTYPE</scope>
</reference>
<comment type="function">
    <text evidence="1 3 6">Mitochondrial fatty acid beta-oxidation enzyme that catalyzes the third step of the beta-oxidation cycle for medium and short-chain 3-hydroxy fatty acyl-CoAs (C4 to C10) (By similarity). Plays a role in the control of insulin secretion by inhibiting the activation of glutamate dehydrogenase 1 (GLUD1), an enzyme that has an important role in regulating amino acid-induced insulin secretion (PubMed:20670938). Plays a role in the maintenance of normal spermatogenesis through the reduction of fatty acid accumulation in the testes (PubMed:36398584).</text>
</comment>
<comment type="function">
    <molecule>Isoform 2</molecule>
    <text evidence="5">Inhibits cell proliferation.</text>
</comment>
<comment type="catalytic activity">
    <reaction evidence="1">
        <text>a (3S)-3-hydroxyacyl-CoA + NAD(+) = a 3-oxoacyl-CoA + NADH + H(+)</text>
        <dbReference type="Rhea" id="RHEA:22432"/>
        <dbReference type="ChEBI" id="CHEBI:15378"/>
        <dbReference type="ChEBI" id="CHEBI:57318"/>
        <dbReference type="ChEBI" id="CHEBI:57540"/>
        <dbReference type="ChEBI" id="CHEBI:57945"/>
        <dbReference type="ChEBI" id="CHEBI:90726"/>
        <dbReference type="EC" id="1.1.1.35"/>
    </reaction>
</comment>
<comment type="catalytic activity">
    <reaction evidence="1">
        <text>(3S)-3-hydroxybutanoyl-CoA + NAD(+) = acetoacetyl-CoA + NADH + H(+)</text>
        <dbReference type="Rhea" id="RHEA:30799"/>
        <dbReference type="ChEBI" id="CHEBI:15378"/>
        <dbReference type="ChEBI" id="CHEBI:57286"/>
        <dbReference type="ChEBI" id="CHEBI:57316"/>
        <dbReference type="ChEBI" id="CHEBI:57540"/>
        <dbReference type="ChEBI" id="CHEBI:57945"/>
    </reaction>
</comment>
<comment type="catalytic activity">
    <reaction evidence="1">
        <text>(3S)-hydroxydecanoyl-CoA + NAD(+) = 3-oxodecanoyl-CoA + NADH + H(+)</text>
        <dbReference type="Rhea" id="RHEA:31187"/>
        <dbReference type="ChEBI" id="CHEBI:15378"/>
        <dbReference type="ChEBI" id="CHEBI:57540"/>
        <dbReference type="ChEBI" id="CHEBI:57945"/>
        <dbReference type="ChEBI" id="CHEBI:62548"/>
        <dbReference type="ChEBI" id="CHEBI:62616"/>
    </reaction>
</comment>
<comment type="catalytic activity">
    <reaction evidence="1">
        <text>(3S)-hydroxyhexadecanoyl-CoA + NAD(+) = 3-oxohexadecanoyl-CoA + NADH + H(+)</text>
        <dbReference type="Rhea" id="RHEA:31159"/>
        <dbReference type="ChEBI" id="CHEBI:15378"/>
        <dbReference type="ChEBI" id="CHEBI:57349"/>
        <dbReference type="ChEBI" id="CHEBI:57540"/>
        <dbReference type="ChEBI" id="CHEBI:57945"/>
        <dbReference type="ChEBI" id="CHEBI:62613"/>
    </reaction>
</comment>
<comment type="pathway">
    <text>Lipid metabolism; fatty acid beta-oxidation.</text>
</comment>
<comment type="subunit">
    <text evidence="1 3">Homodimer (By similarity). Interacts with GLUD1; this interaction inhibits the activation of glutamate dehydrogenase 1 (GLUD1) (PubMed:20670938).</text>
</comment>
<comment type="subcellular location">
    <molecule>Isoform 1</molecule>
    <subcellularLocation>
        <location evidence="5">Mitochondrion matrix</location>
    </subcellularLocation>
</comment>
<comment type="subcellular location">
    <molecule>Isoform 2</molecule>
    <subcellularLocation>
        <location evidence="5">Nucleus</location>
    </subcellularLocation>
    <subcellularLocation>
        <location evidence="5">Cytoplasm</location>
        <location evidence="5">Cytosol</location>
    </subcellularLocation>
    <text evidence="5">Predominantly nuclear.</text>
</comment>
<comment type="alternative products">
    <event type="alternative initiation"/>
    <isoform>
        <id>Q61425-1</id>
        <name>1</name>
        <name evidence="7">HADH-M</name>
        <sequence type="displayed"/>
    </isoform>
    <isoform>
        <id>Q61425-2</id>
        <name>2</name>
        <name evidence="7">HADH-S</name>
        <sequence type="described" ref="VSP_062392 VSP_062393"/>
    </isoform>
</comment>
<comment type="tissue specificity">
    <text evidence="3">Expressed in liver, kidney, brain, and pancreatic islets.</text>
</comment>
<comment type="PTM">
    <text evidence="4">Succinylation at Lys-81, adjacent to a coenzyme A binding site. Desuccinylated by SIRT5.</text>
</comment>
<comment type="disruption phenotype">
    <text evidence="3 6">Deficient mice display reduced levels of plasma glucose, elevated plasma insulin levels, increased plasma 3-hydroxybutyrylcarnitine and increased urinary 3-hydroxyglutarate (PubMed:20670938). Islets isolated from knockout mice have increased amino acid-stimulated insulin secretion and higher sensitivity to leucine-stimulated insulin secretion (PubMed:20670938). Increased body weight, reduced litter, smaller testes size and weight but does not affect the epididymis (PubMed:36398584). Causes a significant increase in the levels of free fatty acids and saturated fatty acids in the testis as well as an increase in the expression of Tnf, Il1b and Il6 in the testis, epididymis and blood (PubMed:36398584). Causes systemic inflammation due to increased expression of Bax and activated Casp3 and the reduction of Bcl2 expression, in the testis but not in the epididymis (PubMed:36398584). Increases germ cell apoptosis in the testis but not in the epididymis (PubMed:36398584). Severe testicular injury in older mice, with large vacuoles and disorganized structures in the seminiferous tubules (PubMed:36398584). Increased testis damage including nuclear marginalization and multinucleated giant cells (PubMed:36398584). Increased sperm abnormality including reduced sperm concentration, low motility, and abnormal sperm morphology such as abnormal heads, coiled tails and decapitated sperms (PubMed:36398584). Higher acrosome defects including deformation, mislocalization, missing acrosome and an increase in spontaneous acrosome reactions (PubMed:36398584). Damages spermatocyte meiosis but does not affect spermatogonia or the number of Sertoli cells in the testicular tubules (PubMed:36398584).</text>
</comment>
<comment type="similarity">
    <text evidence="9">Belongs to the 3-hydroxyacyl-CoA dehydrogenase family.</text>
</comment>
<comment type="caution">
    <molecule>Isoform 2</molecule>
    <text evidence="5">The protein uses an unusual UUG leucine start codon.</text>
</comment>
<comment type="sequence caution" evidence="5">
    <conflict type="erroneous initiation">
        <sequence resource="EMBL-CDS" id="BAA06122"/>
    </conflict>
    <text>Truncated N-terminus.</text>
</comment>
<sequence>MAFVTRQFLRSMSSSSSASAAAKKILIKHVTVIGGGLMGAGIAQVAAATGHTVVLVDQTEDILAKSKKGIEESLKRMAKKKFTENPKAGDEFVEKTLSCLSTSTDAASVVHSTDLVVEAIVENLKLKNELFQRLDKFAAEHTIFASNTSSLQITNIANATTRQDRFAGLHFFNPVPMMKLVEVIKTPMTSQKTFESLVDFCKTLGKHPVSCKDTPGFIVNRLLVPYLIEAVRLHERGDASKEDIDTAMKLGAGYPMGPFELLDYVGLDTTKFILDGWHEMEPENPLFQPSPSMNNLVAQKKLGKKTGEGFYKYK</sequence>
<gene>
    <name type="primary">Hadh</name>
    <name type="synonym">Hadhsc</name>
    <name type="synonym">Mschad</name>
    <name type="synonym">Schad</name>
</gene>
<feature type="transit peptide" description="Mitochondrion" evidence="2">
    <location>
        <begin position="1"/>
        <end position="12"/>
    </location>
</feature>
<feature type="chain" id="PRO_0000007407" description="Hydroxyacyl-coenzyme A dehydrogenase, mitochondrial">
    <location>
        <begin position="13"/>
        <end position="314"/>
    </location>
</feature>
<feature type="binding site" evidence="2">
    <location>
        <begin position="34"/>
        <end position="39"/>
    </location>
    <ligand>
        <name>NAD(+)</name>
        <dbReference type="ChEBI" id="CHEBI:57540"/>
    </ligand>
</feature>
<feature type="binding site" evidence="2">
    <location>
        <position position="57"/>
    </location>
    <ligand>
        <name>NAD(+)</name>
        <dbReference type="ChEBI" id="CHEBI:57540"/>
    </ligand>
</feature>
<feature type="binding site" evidence="2">
    <location>
        <position position="73"/>
    </location>
    <ligand>
        <name>CoA</name>
        <dbReference type="ChEBI" id="CHEBI:57287"/>
    </ligand>
</feature>
<feature type="binding site" evidence="2">
    <location>
        <position position="80"/>
    </location>
    <ligand>
        <name>CoA</name>
        <dbReference type="ChEBI" id="CHEBI:57287"/>
    </ligand>
</feature>
<feature type="binding site" evidence="2">
    <location>
        <position position="122"/>
    </location>
    <ligand>
        <name>NAD(+)</name>
        <dbReference type="ChEBI" id="CHEBI:57540"/>
    </ligand>
</feature>
<feature type="binding site" evidence="2">
    <location>
        <position position="127"/>
    </location>
    <ligand>
        <name>NAD(+)</name>
        <dbReference type="ChEBI" id="CHEBI:57540"/>
    </ligand>
</feature>
<feature type="binding site" evidence="2">
    <location>
        <position position="149"/>
    </location>
    <ligand>
        <name>CoA</name>
        <dbReference type="ChEBI" id="CHEBI:57287"/>
    </ligand>
</feature>
<feature type="binding site" evidence="2">
    <location>
        <position position="149"/>
    </location>
    <ligand>
        <name>NAD(+)</name>
        <dbReference type="ChEBI" id="CHEBI:57540"/>
    </ligand>
</feature>
<feature type="binding site" evidence="2">
    <location>
        <position position="173"/>
    </location>
    <ligand>
        <name>NAD(+)</name>
        <dbReference type="ChEBI" id="CHEBI:57540"/>
    </ligand>
</feature>
<feature type="binding site" evidence="2">
    <location>
        <position position="305"/>
    </location>
    <ligand>
        <name>NAD(+)</name>
        <dbReference type="ChEBI" id="CHEBI:57540"/>
    </ligand>
</feature>
<feature type="site" description="Important for catalytic activity" evidence="2">
    <location>
        <position position="170"/>
    </location>
</feature>
<feature type="modified residue" description="N6-acetyllysine" evidence="10">
    <location>
        <position position="75"/>
    </location>
</feature>
<feature type="modified residue" description="N6-succinyllysine" evidence="11">
    <location>
        <position position="80"/>
    </location>
</feature>
<feature type="modified residue" description="N6-acetyllysine; alternate" evidence="10">
    <location>
        <position position="81"/>
    </location>
</feature>
<feature type="modified residue" description="N6-succinyllysine; alternate" evidence="11">
    <location>
        <position position="81"/>
    </location>
</feature>
<feature type="modified residue" description="N6-acetyllysine; alternate" evidence="10">
    <location>
        <position position="87"/>
    </location>
</feature>
<feature type="modified residue" description="N6-succinyllysine; alternate" evidence="11">
    <location>
        <position position="87"/>
    </location>
</feature>
<feature type="modified residue" description="N6-acetyllysine" evidence="10">
    <location>
        <position position="125"/>
    </location>
</feature>
<feature type="modified residue" description="N6-(2-hydroxyisobutyryl)lysine" evidence="2">
    <location>
        <position position="127"/>
    </location>
</feature>
<feature type="modified residue" description="N6-acetyllysine; alternate" evidence="10">
    <location>
        <position position="136"/>
    </location>
</feature>
<feature type="modified residue" description="N6-succinyllysine; alternate" evidence="11">
    <location>
        <position position="136"/>
    </location>
</feature>
<feature type="modified residue" description="N6-acetyllysine" evidence="10">
    <location>
        <position position="179"/>
    </location>
</feature>
<feature type="modified residue" description="N6-acetyllysine; alternate" evidence="10">
    <location>
        <position position="185"/>
    </location>
</feature>
<feature type="modified residue" description="N6-succinyllysine; alternate" evidence="11">
    <location>
        <position position="185"/>
    </location>
</feature>
<feature type="modified residue" description="N6-acetyllysine; alternate" evidence="10">
    <location>
        <position position="192"/>
    </location>
</feature>
<feature type="modified residue" description="N6-succinyllysine; alternate" evidence="11">
    <location>
        <position position="192"/>
    </location>
</feature>
<feature type="modified residue" description="N6-acetyllysine; alternate" evidence="10">
    <location>
        <position position="202"/>
    </location>
</feature>
<feature type="modified residue" description="N6-succinyllysine; alternate" evidence="11">
    <location>
        <position position="202"/>
    </location>
</feature>
<feature type="modified residue" description="N6-succinyllysine" evidence="11">
    <location>
        <position position="206"/>
    </location>
</feature>
<feature type="modified residue" description="N6-acetyllysine; alternate" evidence="10">
    <location>
        <position position="212"/>
    </location>
</feature>
<feature type="modified residue" description="N6-succinyllysine; alternate" evidence="11">
    <location>
        <position position="212"/>
    </location>
</feature>
<feature type="modified residue" description="N6-acetyllysine; alternate" evidence="10 11">
    <location>
        <position position="241"/>
    </location>
</feature>
<feature type="modified residue" description="N6-succinyllysine; alternate" evidence="11">
    <location>
        <position position="241"/>
    </location>
</feature>
<feature type="modified residue" description="N6-acetyllysine; alternate" evidence="2">
    <location>
        <position position="312"/>
    </location>
</feature>
<feature type="modified residue" description="N6-succinyllysine; alternate" evidence="11">
    <location>
        <position position="312"/>
    </location>
</feature>
<feature type="splice variant" id="VSP_062392" description="In isoform 2." evidence="5">
    <location>
        <begin position="1"/>
        <end position="8"/>
    </location>
</feature>
<feature type="splice variant" id="VSP_062393" description="In isoform 2." evidence="5">
    <original>L</original>
    <variation>M</variation>
    <location>
        <position position="9"/>
    </location>
</feature>
<feature type="sequence conflict" description="In Ref. 3; BAE40188." evidence="9" ref="3">
    <original>S</original>
    <variation>Y</variation>
    <location>
        <position position="11"/>
    </location>
</feature>
<feature type="sequence conflict" description="In Ref. 3; BAE41023." evidence="9" ref="3">
    <original>V</original>
    <variation>M</variation>
    <location>
        <position position="56"/>
    </location>
</feature>
<feature type="sequence conflict" description="In Ref. 1; BAA06122." evidence="9" ref="1">
    <original>H</original>
    <variation>D</variation>
    <location>
        <position position="111"/>
    </location>
</feature>
<feature type="sequence conflict" description="In Ref. 3; BAE40188." evidence="9" ref="3">
    <original>S</original>
    <variation>G</variation>
    <location>
        <position position="146"/>
    </location>
</feature>
<feature type="sequence conflict" description="In Ref. 1; BAA06122." evidence="9" ref="1">
    <original>C</original>
    <variation>S</variation>
    <location>
        <position position="211"/>
    </location>
</feature>
<proteinExistence type="evidence at protein level"/>
<dbReference type="EC" id="1.1.1.35" evidence="1"/>
<dbReference type="EMBL" id="D29639">
    <property type="protein sequence ID" value="BAA06122.1"/>
    <property type="status" value="ALT_INIT"/>
    <property type="molecule type" value="mRNA"/>
</dbReference>
<dbReference type="EMBL" id="AF375597">
    <property type="protein sequence ID" value="AAK54642.1"/>
    <property type="molecule type" value="Genomic_DNA"/>
</dbReference>
<dbReference type="EMBL" id="AF375596">
    <property type="protein sequence ID" value="AAK54642.1"/>
    <property type="status" value="JOINED"/>
    <property type="molecule type" value="Genomic_DNA"/>
</dbReference>
<dbReference type="EMBL" id="AK132260">
    <property type="protein sequence ID" value="BAE21064.1"/>
    <property type="molecule type" value="mRNA"/>
</dbReference>
<dbReference type="EMBL" id="AK148486">
    <property type="protein sequence ID" value="BAE28581.1"/>
    <property type="molecule type" value="mRNA"/>
</dbReference>
<dbReference type="EMBL" id="AK167024">
    <property type="protein sequence ID" value="BAE39197.1"/>
    <property type="molecule type" value="mRNA"/>
</dbReference>
<dbReference type="EMBL" id="AK168238">
    <property type="protein sequence ID" value="BAE40188.1"/>
    <property type="molecule type" value="mRNA"/>
</dbReference>
<dbReference type="EMBL" id="AK168877">
    <property type="protein sequence ID" value="BAE40695.1"/>
    <property type="molecule type" value="mRNA"/>
</dbReference>
<dbReference type="EMBL" id="AK169261">
    <property type="protein sequence ID" value="BAE41023.1"/>
    <property type="molecule type" value="mRNA"/>
</dbReference>
<dbReference type="EMBL" id="BC028833">
    <property type="protein sequence ID" value="AAH28833.1"/>
    <property type="molecule type" value="mRNA"/>
</dbReference>
<dbReference type="EMBL" id="BC064712">
    <property type="protein sequence ID" value="AAH64712.1"/>
    <property type="molecule type" value="mRNA"/>
</dbReference>
<dbReference type="CCDS" id="CCDS38640.1">
    <molecule id="Q61425-1"/>
</dbReference>
<dbReference type="PIR" id="JC4210">
    <property type="entry name" value="JC4210"/>
</dbReference>
<dbReference type="RefSeq" id="NP_032238.2">
    <molecule id="Q61425-1"/>
    <property type="nucleotide sequence ID" value="NM_008212.4"/>
</dbReference>
<dbReference type="SMR" id="Q61425"/>
<dbReference type="BioGRID" id="200201">
    <property type="interactions" value="41"/>
</dbReference>
<dbReference type="FunCoup" id="Q61425">
    <property type="interactions" value="2375"/>
</dbReference>
<dbReference type="IntAct" id="Q61425">
    <property type="interactions" value="4"/>
</dbReference>
<dbReference type="MINT" id="Q61425"/>
<dbReference type="STRING" id="10090.ENSMUSP00000029610"/>
<dbReference type="GlyGen" id="Q61425">
    <property type="glycosylation" value="1 site, 1 O-linked glycan (1 site)"/>
</dbReference>
<dbReference type="iPTMnet" id="Q61425"/>
<dbReference type="PhosphoSitePlus" id="Q61425"/>
<dbReference type="SwissPalm" id="Q61425"/>
<dbReference type="REPRODUCTION-2DPAGE" id="Q61425"/>
<dbReference type="jPOST" id="Q61425"/>
<dbReference type="PaxDb" id="10090-ENSMUSP00000029610"/>
<dbReference type="PeptideAtlas" id="Q61425"/>
<dbReference type="ProteomicsDB" id="269767"/>
<dbReference type="Pumba" id="Q61425"/>
<dbReference type="Antibodypedia" id="26260">
    <property type="antibodies" value="573 antibodies from 33 providers"/>
</dbReference>
<dbReference type="DNASU" id="15107"/>
<dbReference type="Ensembl" id="ENSMUST00000029610.9">
    <molecule id="Q61425-1"/>
    <property type="protein sequence ID" value="ENSMUSP00000029610.9"/>
    <property type="gene ID" value="ENSMUSG00000027984.9"/>
</dbReference>
<dbReference type="GeneID" id="15107"/>
<dbReference type="KEGG" id="mmu:15107"/>
<dbReference type="UCSC" id="uc008rjl.2">
    <molecule id="Q61425-1"/>
    <property type="organism name" value="mouse"/>
</dbReference>
<dbReference type="AGR" id="MGI:96009"/>
<dbReference type="CTD" id="3033"/>
<dbReference type="MGI" id="MGI:96009">
    <property type="gene designation" value="Hadh"/>
</dbReference>
<dbReference type="VEuPathDB" id="HostDB:ENSMUSG00000027984"/>
<dbReference type="eggNOG" id="KOG2304">
    <property type="taxonomic scope" value="Eukaryota"/>
</dbReference>
<dbReference type="GeneTree" id="ENSGT00940000159984"/>
<dbReference type="HOGENOM" id="CLU_009834_2_0_1"/>
<dbReference type="InParanoid" id="Q61425"/>
<dbReference type="OMA" id="MAHPMGP"/>
<dbReference type="OrthoDB" id="5958943at2759"/>
<dbReference type="PhylomeDB" id="Q61425"/>
<dbReference type="TreeFam" id="TF300886"/>
<dbReference type="Reactome" id="R-MMU-77310">
    <property type="pathway name" value="Beta oxidation of lauroyl-CoA to decanoyl-CoA-CoA"/>
</dbReference>
<dbReference type="Reactome" id="R-MMU-77346">
    <property type="pathway name" value="Beta oxidation of decanoyl-CoA to octanoyl-CoA-CoA"/>
</dbReference>
<dbReference type="Reactome" id="R-MMU-77348">
    <property type="pathway name" value="Beta oxidation of octanoyl-CoA to hexanoyl-CoA"/>
</dbReference>
<dbReference type="Reactome" id="R-MMU-77350">
    <property type="pathway name" value="Beta oxidation of hexanoyl-CoA to butanoyl-CoA"/>
</dbReference>
<dbReference type="Reactome" id="R-MMU-77352">
    <property type="pathway name" value="Beta oxidation of butanoyl-CoA to acetyl-CoA"/>
</dbReference>
<dbReference type="Reactome" id="R-MMU-9837999">
    <property type="pathway name" value="Mitochondrial protein degradation"/>
</dbReference>
<dbReference type="UniPathway" id="UPA00659"/>
<dbReference type="BioGRID-ORCS" id="15107">
    <property type="hits" value="2 hits in 79 CRISPR screens"/>
</dbReference>
<dbReference type="ChiTaRS" id="Hadh">
    <property type="organism name" value="mouse"/>
</dbReference>
<dbReference type="PRO" id="PR:Q61425"/>
<dbReference type="Proteomes" id="UP000000589">
    <property type="component" value="Chromosome 3"/>
</dbReference>
<dbReference type="RNAct" id="Q61425">
    <property type="molecule type" value="protein"/>
</dbReference>
<dbReference type="Bgee" id="ENSMUSG00000027984">
    <property type="expression patterns" value="Expressed in paneth cell and 276 other cell types or tissues"/>
</dbReference>
<dbReference type="GO" id="GO:0005829">
    <property type="term" value="C:cytosol"/>
    <property type="evidence" value="ECO:0007669"/>
    <property type="project" value="UniProtKB-SubCell"/>
</dbReference>
<dbReference type="GO" id="GO:0005743">
    <property type="term" value="C:mitochondrial inner membrane"/>
    <property type="evidence" value="ECO:0007005"/>
    <property type="project" value="MGI"/>
</dbReference>
<dbReference type="GO" id="GO:0005759">
    <property type="term" value="C:mitochondrial matrix"/>
    <property type="evidence" value="ECO:0007669"/>
    <property type="project" value="UniProtKB-SubCell"/>
</dbReference>
<dbReference type="GO" id="GO:0005739">
    <property type="term" value="C:mitochondrion"/>
    <property type="evidence" value="ECO:0000314"/>
    <property type="project" value="MGI"/>
</dbReference>
<dbReference type="GO" id="GO:0005654">
    <property type="term" value="C:nucleoplasm"/>
    <property type="evidence" value="ECO:0007669"/>
    <property type="project" value="Ensembl"/>
</dbReference>
<dbReference type="GO" id="GO:0003857">
    <property type="term" value="F:3-hydroxyacyl-CoA dehydrogenase activity"/>
    <property type="evidence" value="ECO:0000314"/>
    <property type="project" value="MGI"/>
</dbReference>
<dbReference type="GO" id="GO:0042802">
    <property type="term" value="F:identical protein binding"/>
    <property type="evidence" value="ECO:0000250"/>
    <property type="project" value="UniProtKB"/>
</dbReference>
<dbReference type="GO" id="GO:0070403">
    <property type="term" value="F:NAD+ binding"/>
    <property type="evidence" value="ECO:0000250"/>
    <property type="project" value="UniProtKB"/>
</dbReference>
<dbReference type="GO" id="GO:0030154">
    <property type="term" value="P:cell differentiation"/>
    <property type="evidence" value="ECO:0007669"/>
    <property type="project" value="UniProtKB-KW"/>
</dbReference>
<dbReference type="GO" id="GO:0006635">
    <property type="term" value="P:fatty acid beta-oxidation"/>
    <property type="evidence" value="ECO:0000250"/>
    <property type="project" value="UniProtKB"/>
</dbReference>
<dbReference type="GO" id="GO:0046676">
    <property type="term" value="P:negative regulation of insulin secretion"/>
    <property type="evidence" value="ECO:0007669"/>
    <property type="project" value="Ensembl"/>
</dbReference>
<dbReference type="GO" id="GO:0120162">
    <property type="term" value="P:positive regulation of cold-induced thermogenesis"/>
    <property type="evidence" value="ECO:0000315"/>
    <property type="project" value="YuBioLab"/>
</dbReference>
<dbReference type="GO" id="GO:0050796">
    <property type="term" value="P:regulation of insulin secretion"/>
    <property type="evidence" value="ECO:0000315"/>
    <property type="project" value="UniProtKB"/>
</dbReference>
<dbReference type="GO" id="GO:0014823">
    <property type="term" value="P:response to activity"/>
    <property type="evidence" value="ECO:0007669"/>
    <property type="project" value="Ensembl"/>
</dbReference>
<dbReference type="GO" id="GO:0032868">
    <property type="term" value="P:response to insulin"/>
    <property type="evidence" value="ECO:0007669"/>
    <property type="project" value="Ensembl"/>
</dbReference>
<dbReference type="GO" id="GO:0009410">
    <property type="term" value="P:response to xenobiotic stimulus"/>
    <property type="evidence" value="ECO:0007669"/>
    <property type="project" value="Ensembl"/>
</dbReference>
<dbReference type="GO" id="GO:0007283">
    <property type="term" value="P:spermatogenesis"/>
    <property type="evidence" value="ECO:0007669"/>
    <property type="project" value="UniProtKB-KW"/>
</dbReference>
<dbReference type="FunFam" id="1.10.1040.10:FF:000019">
    <property type="entry name" value="3-hydroxybutyryl-CoA dehydrogenase FadB2"/>
    <property type="match status" value="1"/>
</dbReference>
<dbReference type="FunFam" id="3.40.50.720:FF:000258">
    <property type="entry name" value="Hydroxyacyl-coenzyme A dehydrogenase, mitochondrial"/>
    <property type="match status" value="1"/>
</dbReference>
<dbReference type="Gene3D" id="1.10.1040.10">
    <property type="entry name" value="N-(1-d-carboxylethyl)-l-norvaline Dehydrogenase, domain 2"/>
    <property type="match status" value="1"/>
</dbReference>
<dbReference type="Gene3D" id="3.40.50.720">
    <property type="entry name" value="NAD(P)-binding Rossmann-like Domain"/>
    <property type="match status" value="1"/>
</dbReference>
<dbReference type="InterPro" id="IPR022694">
    <property type="entry name" value="3-OHacyl-CoA_DH"/>
</dbReference>
<dbReference type="InterPro" id="IPR006180">
    <property type="entry name" value="3-OHacyl-CoA_DH_CS"/>
</dbReference>
<dbReference type="InterPro" id="IPR006176">
    <property type="entry name" value="3-OHacyl-CoA_DH_NAD-bd"/>
</dbReference>
<dbReference type="InterPro" id="IPR006108">
    <property type="entry name" value="3HC_DH_C"/>
</dbReference>
<dbReference type="InterPro" id="IPR008927">
    <property type="entry name" value="6-PGluconate_DH-like_C_sf"/>
</dbReference>
<dbReference type="InterPro" id="IPR013328">
    <property type="entry name" value="6PGD_dom2"/>
</dbReference>
<dbReference type="InterPro" id="IPR052242">
    <property type="entry name" value="Mito_3-hydroxyacyl-CoA_DH"/>
</dbReference>
<dbReference type="InterPro" id="IPR036291">
    <property type="entry name" value="NAD(P)-bd_dom_sf"/>
</dbReference>
<dbReference type="PANTHER" id="PTHR43561">
    <property type="match status" value="1"/>
</dbReference>
<dbReference type="PANTHER" id="PTHR43561:SF3">
    <property type="entry name" value="HYDROXYACYL-COENZYME A DEHYDROGENASE, MITOCHONDRIAL"/>
    <property type="match status" value="1"/>
</dbReference>
<dbReference type="Pfam" id="PF00725">
    <property type="entry name" value="3HCDH"/>
    <property type="match status" value="1"/>
</dbReference>
<dbReference type="Pfam" id="PF02737">
    <property type="entry name" value="3HCDH_N"/>
    <property type="match status" value="1"/>
</dbReference>
<dbReference type="PIRSF" id="PIRSF000105">
    <property type="entry name" value="HCDH"/>
    <property type="match status" value="1"/>
</dbReference>
<dbReference type="SUPFAM" id="SSF48179">
    <property type="entry name" value="6-phosphogluconate dehydrogenase C-terminal domain-like"/>
    <property type="match status" value="1"/>
</dbReference>
<dbReference type="SUPFAM" id="SSF51735">
    <property type="entry name" value="NAD(P)-binding Rossmann-fold domains"/>
    <property type="match status" value="1"/>
</dbReference>
<dbReference type="PROSITE" id="PS00067">
    <property type="entry name" value="3HCDH"/>
    <property type="match status" value="1"/>
</dbReference>
<keyword id="KW-0007">Acetylation</keyword>
<keyword id="KW-0024">Alternative initiation</keyword>
<keyword id="KW-0963">Cytoplasm</keyword>
<keyword id="KW-0221">Differentiation</keyword>
<keyword id="KW-0276">Fatty acid metabolism</keyword>
<keyword id="KW-0379">Hydroxylation</keyword>
<keyword id="KW-0443">Lipid metabolism</keyword>
<keyword id="KW-0496">Mitochondrion</keyword>
<keyword id="KW-0520">NAD</keyword>
<keyword id="KW-0539">Nucleus</keyword>
<keyword id="KW-0560">Oxidoreductase</keyword>
<keyword id="KW-1185">Reference proteome</keyword>
<keyword id="KW-0744">Spermatogenesis</keyword>
<keyword id="KW-0809">Transit peptide</keyword>
<evidence type="ECO:0000250" key="1">
    <source>
        <dbReference type="UniProtKB" id="P00348"/>
    </source>
</evidence>
<evidence type="ECO:0000250" key="2">
    <source>
        <dbReference type="UniProtKB" id="Q16836"/>
    </source>
</evidence>
<evidence type="ECO:0000269" key="3">
    <source>
    </source>
</evidence>
<evidence type="ECO:0000269" key="4">
    <source>
    </source>
</evidence>
<evidence type="ECO:0000269" key="5">
    <source>
    </source>
</evidence>
<evidence type="ECO:0000269" key="6">
    <source>
    </source>
</evidence>
<evidence type="ECO:0000303" key="7">
    <source>
    </source>
</evidence>
<evidence type="ECO:0000303" key="8">
    <source ref="2"/>
</evidence>
<evidence type="ECO:0000305" key="9"/>
<evidence type="ECO:0007744" key="10">
    <source>
    </source>
</evidence>
<evidence type="ECO:0007744" key="11">
    <source>
    </source>
</evidence>